<reference key="1">
    <citation type="journal article" date="2011" name="J. Bacteriol.">
        <title>Genome sequence of Thermotoga sp. strain RQ2, a hyperthermophilic bacterium isolated from a geothermally heated region of the seafloor near Ribeira Quente, the Azores.</title>
        <authorList>
            <person name="Swithers K.S."/>
            <person name="DiPippo J.L."/>
            <person name="Bruce D.C."/>
            <person name="Detter C."/>
            <person name="Tapia R."/>
            <person name="Han S."/>
            <person name="Saunders E."/>
            <person name="Goodwin L.A."/>
            <person name="Han J."/>
            <person name="Woyke T."/>
            <person name="Pitluck S."/>
            <person name="Pennacchio L."/>
            <person name="Nolan M."/>
            <person name="Mikhailova N."/>
            <person name="Lykidis A."/>
            <person name="Land M.L."/>
            <person name="Brettin T."/>
            <person name="Stetter K.O."/>
            <person name="Nelson K.E."/>
            <person name="Gogarten J.P."/>
            <person name="Noll K.M."/>
        </authorList>
    </citation>
    <scope>NUCLEOTIDE SEQUENCE [LARGE SCALE GENOMIC DNA]</scope>
    <source>
        <strain>RQ2</strain>
    </source>
</reference>
<reference evidence="4" key="2">
    <citation type="submission" date="2005-03" db="PDB data bank">
        <title>Crystal structure of glycerol-3-phosphate dehydrogenase (TM0378) from Thermotoga maritima at 2.00 A resolution.</title>
        <authorList>
            <consortium name="Joint Center for Structural Genomics (JCSG)"/>
        </authorList>
    </citation>
    <scope>X-RAY CRYSTALLOGRAPHY (2.00 ANGSTROMS) IN COMPLEX WITH GLYCEROL-3-PHOSPHATE AND NADPH</scope>
</reference>
<gene>
    <name evidence="1" type="primary">gpsA</name>
    <name evidence="3" type="ordered locus">TRQ2_0543</name>
</gene>
<proteinExistence type="evidence at protein level"/>
<evidence type="ECO:0000255" key="1">
    <source>
        <dbReference type="HAMAP-Rule" id="MF_00394"/>
    </source>
</evidence>
<evidence type="ECO:0000269" key="2">
    <source ref="2"/>
</evidence>
<evidence type="ECO:0000312" key="3">
    <source>
        <dbReference type="EMBL" id="ACB08897.1"/>
    </source>
</evidence>
<evidence type="ECO:0007744" key="4">
    <source>
        <dbReference type="PDB" id="1Z82"/>
    </source>
</evidence>
<evidence type="ECO:0007829" key="5">
    <source>
        <dbReference type="PDB" id="1Z82"/>
    </source>
</evidence>
<protein>
    <recommendedName>
        <fullName evidence="1">Glycerol-3-phosphate dehydrogenase [NAD(P)+]</fullName>
        <ecNumber evidence="1">1.1.1.94</ecNumber>
    </recommendedName>
    <alternativeName>
        <fullName evidence="1">NAD(P)(+)-dependent glycerol-3-phosphate dehydrogenase</fullName>
    </alternativeName>
    <alternativeName>
        <fullName evidence="1">NAD(P)H-dependent dihydroxyacetone-phosphate reductase</fullName>
    </alternativeName>
</protein>
<comment type="function">
    <text evidence="1">Catalyzes the reduction of the glycolytic intermediate dihydroxyacetone phosphate (DHAP) to sn-glycerol 3-phosphate (G3P), the key precursor for phospholipid synthesis.</text>
</comment>
<comment type="catalytic activity">
    <reaction evidence="1">
        <text>sn-glycerol 3-phosphate + NAD(+) = dihydroxyacetone phosphate + NADH + H(+)</text>
        <dbReference type="Rhea" id="RHEA:11092"/>
        <dbReference type="ChEBI" id="CHEBI:15378"/>
        <dbReference type="ChEBI" id="CHEBI:57540"/>
        <dbReference type="ChEBI" id="CHEBI:57597"/>
        <dbReference type="ChEBI" id="CHEBI:57642"/>
        <dbReference type="ChEBI" id="CHEBI:57945"/>
        <dbReference type="EC" id="1.1.1.94"/>
    </reaction>
    <physiologicalReaction direction="right-to-left" evidence="1">
        <dbReference type="Rhea" id="RHEA:11094"/>
    </physiologicalReaction>
</comment>
<comment type="catalytic activity">
    <reaction evidence="1">
        <text>sn-glycerol 3-phosphate + NADP(+) = dihydroxyacetone phosphate + NADPH + H(+)</text>
        <dbReference type="Rhea" id="RHEA:11096"/>
        <dbReference type="ChEBI" id="CHEBI:15378"/>
        <dbReference type="ChEBI" id="CHEBI:57597"/>
        <dbReference type="ChEBI" id="CHEBI:57642"/>
        <dbReference type="ChEBI" id="CHEBI:57783"/>
        <dbReference type="ChEBI" id="CHEBI:58349"/>
        <dbReference type="EC" id="1.1.1.94"/>
    </reaction>
    <physiologicalReaction direction="right-to-left" evidence="1">
        <dbReference type="Rhea" id="RHEA:11098"/>
    </physiologicalReaction>
</comment>
<comment type="pathway">
    <text evidence="1">Membrane lipid metabolism; glycerophospholipid metabolism.</text>
</comment>
<comment type="subcellular location">
    <subcellularLocation>
        <location evidence="1">Cytoplasm</location>
    </subcellularLocation>
</comment>
<comment type="similarity">
    <text evidence="1">Belongs to the NAD-dependent glycerol-3-phosphate dehydrogenase family.</text>
</comment>
<dbReference type="EC" id="1.1.1.94" evidence="1"/>
<dbReference type="EMBL" id="CP000969">
    <property type="protein sequence ID" value="ACB08897.1"/>
    <property type="molecule type" value="Genomic_DNA"/>
</dbReference>
<dbReference type="RefSeq" id="WP_012310608.1">
    <property type="nucleotide sequence ID" value="NC_010483.1"/>
</dbReference>
<dbReference type="PDB" id="1Z82">
    <property type="method" value="X-ray"/>
    <property type="resolution" value="2.00 A"/>
    <property type="chains" value="A/B=1-321"/>
</dbReference>
<dbReference type="PDBsum" id="1Z82"/>
<dbReference type="SMR" id="A0A0F6AK91"/>
<dbReference type="KEGG" id="trq:TRQ2_0543"/>
<dbReference type="HOGENOM" id="CLU_033449_0_2_0"/>
<dbReference type="UniPathway" id="UPA00940"/>
<dbReference type="EvolutionaryTrace" id="A0A0F6AK91"/>
<dbReference type="Proteomes" id="UP000001687">
    <property type="component" value="Chromosome"/>
</dbReference>
<dbReference type="GO" id="GO:0005829">
    <property type="term" value="C:cytosol"/>
    <property type="evidence" value="ECO:0007669"/>
    <property type="project" value="TreeGrafter"/>
</dbReference>
<dbReference type="GO" id="GO:0047952">
    <property type="term" value="F:glycerol-3-phosphate dehydrogenase [NAD(P)+] activity"/>
    <property type="evidence" value="ECO:0007669"/>
    <property type="project" value="UniProtKB-UniRule"/>
</dbReference>
<dbReference type="GO" id="GO:0051287">
    <property type="term" value="F:NAD binding"/>
    <property type="evidence" value="ECO:0007669"/>
    <property type="project" value="InterPro"/>
</dbReference>
<dbReference type="GO" id="GO:0005975">
    <property type="term" value="P:carbohydrate metabolic process"/>
    <property type="evidence" value="ECO:0007669"/>
    <property type="project" value="InterPro"/>
</dbReference>
<dbReference type="GO" id="GO:0046167">
    <property type="term" value="P:glycerol-3-phosphate biosynthetic process"/>
    <property type="evidence" value="ECO:0007669"/>
    <property type="project" value="UniProtKB-UniRule"/>
</dbReference>
<dbReference type="GO" id="GO:0046168">
    <property type="term" value="P:glycerol-3-phosphate catabolic process"/>
    <property type="evidence" value="ECO:0007669"/>
    <property type="project" value="InterPro"/>
</dbReference>
<dbReference type="GO" id="GO:0006650">
    <property type="term" value="P:glycerophospholipid metabolic process"/>
    <property type="evidence" value="ECO:0007669"/>
    <property type="project" value="UniProtKB-UniRule"/>
</dbReference>
<dbReference type="GO" id="GO:0008654">
    <property type="term" value="P:phospholipid biosynthetic process"/>
    <property type="evidence" value="ECO:0007669"/>
    <property type="project" value="UniProtKB-KW"/>
</dbReference>
<dbReference type="FunFam" id="1.10.1040.10:FF:000001">
    <property type="entry name" value="Glycerol-3-phosphate dehydrogenase [NAD(P)+]"/>
    <property type="match status" value="1"/>
</dbReference>
<dbReference type="Gene3D" id="1.10.1040.10">
    <property type="entry name" value="N-(1-d-carboxylethyl)-l-norvaline Dehydrogenase, domain 2"/>
    <property type="match status" value="1"/>
</dbReference>
<dbReference type="Gene3D" id="3.40.50.720">
    <property type="entry name" value="NAD(P)-binding Rossmann-like Domain"/>
    <property type="match status" value="1"/>
</dbReference>
<dbReference type="HAMAP" id="MF_00394">
    <property type="entry name" value="NAD_Glyc3P_dehydrog"/>
    <property type="match status" value="1"/>
</dbReference>
<dbReference type="InterPro" id="IPR008927">
    <property type="entry name" value="6-PGluconate_DH-like_C_sf"/>
</dbReference>
<dbReference type="InterPro" id="IPR013328">
    <property type="entry name" value="6PGD_dom2"/>
</dbReference>
<dbReference type="InterPro" id="IPR006168">
    <property type="entry name" value="G3P_DH_NAD-dep"/>
</dbReference>
<dbReference type="InterPro" id="IPR006109">
    <property type="entry name" value="G3P_DH_NAD-dep_C"/>
</dbReference>
<dbReference type="InterPro" id="IPR011128">
    <property type="entry name" value="G3P_DH_NAD-dep_N"/>
</dbReference>
<dbReference type="InterPro" id="IPR036291">
    <property type="entry name" value="NAD(P)-bd_dom_sf"/>
</dbReference>
<dbReference type="NCBIfam" id="NF000940">
    <property type="entry name" value="PRK00094.1-2"/>
    <property type="match status" value="1"/>
</dbReference>
<dbReference type="NCBIfam" id="NF000942">
    <property type="entry name" value="PRK00094.1-4"/>
    <property type="match status" value="1"/>
</dbReference>
<dbReference type="PANTHER" id="PTHR11728">
    <property type="entry name" value="GLYCEROL-3-PHOSPHATE DEHYDROGENASE"/>
    <property type="match status" value="1"/>
</dbReference>
<dbReference type="PANTHER" id="PTHR11728:SF1">
    <property type="entry name" value="GLYCEROL-3-PHOSPHATE DEHYDROGENASE [NAD(+)] 2, CHLOROPLASTIC"/>
    <property type="match status" value="1"/>
</dbReference>
<dbReference type="Pfam" id="PF07479">
    <property type="entry name" value="NAD_Gly3P_dh_C"/>
    <property type="match status" value="1"/>
</dbReference>
<dbReference type="Pfam" id="PF01210">
    <property type="entry name" value="NAD_Gly3P_dh_N"/>
    <property type="match status" value="1"/>
</dbReference>
<dbReference type="PIRSF" id="PIRSF000114">
    <property type="entry name" value="Glycerol-3-P_dh"/>
    <property type="match status" value="1"/>
</dbReference>
<dbReference type="PRINTS" id="PR00077">
    <property type="entry name" value="GPDHDRGNASE"/>
</dbReference>
<dbReference type="SUPFAM" id="SSF48179">
    <property type="entry name" value="6-phosphogluconate dehydrogenase C-terminal domain-like"/>
    <property type="match status" value="1"/>
</dbReference>
<dbReference type="SUPFAM" id="SSF51735">
    <property type="entry name" value="NAD(P)-binding Rossmann-fold domains"/>
    <property type="match status" value="1"/>
</dbReference>
<feature type="chain" id="PRO_0000460335" description="Glycerol-3-phosphate dehydrogenase [NAD(P)+]">
    <location>
        <begin position="1"/>
        <end position="321"/>
    </location>
</feature>
<feature type="active site" description="Proton acceptor" evidence="1">
    <location>
        <position position="177"/>
    </location>
</feature>
<feature type="binding site" evidence="2 4">
    <location>
        <position position="10"/>
    </location>
    <ligand>
        <name>NADPH</name>
        <dbReference type="ChEBI" id="CHEBI:57783"/>
    </ligand>
</feature>
<feature type="binding site" evidence="2 4">
    <location>
        <position position="11"/>
    </location>
    <ligand>
        <name>NADPH</name>
        <dbReference type="ChEBI" id="CHEBI:57783"/>
    </ligand>
</feature>
<feature type="binding site" evidence="2 4">
    <location>
        <position position="31"/>
    </location>
    <ligand>
        <name>NADPH</name>
        <dbReference type="ChEBI" id="CHEBI:57783"/>
    </ligand>
</feature>
<feature type="binding site" evidence="2 4">
    <location>
        <position position="32"/>
    </location>
    <ligand>
        <name>NADPH</name>
        <dbReference type="ChEBI" id="CHEBI:57783"/>
    </ligand>
</feature>
<feature type="binding site" evidence="2 4">
    <location>
        <position position="47"/>
    </location>
    <ligand>
        <name>NADPH</name>
        <dbReference type="ChEBI" id="CHEBI:57783"/>
    </ligand>
</feature>
<feature type="binding site" evidence="2 4">
    <location>
        <position position="98"/>
    </location>
    <ligand>
        <name>NADPH</name>
        <dbReference type="ChEBI" id="CHEBI:57783"/>
    </ligand>
</feature>
<feature type="binding site" evidence="2 4">
    <location>
        <position position="98"/>
    </location>
    <ligand>
        <name>sn-glycerol 3-phosphate</name>
        <dbReference type="ChEBI" id="CHEBI:57597"/>
    </ligand>
</feature>
<feature type="binding site" evidence="2 4">
    <location>
        <position position="125"/>
    </location>
    <ligand>
        <name>sn-glycerol 3-phosphate</name>
        <dbReference type="ChEBI" id="CHEBI:57597"/>
    </ligand>
</feature>
<feature type="binding site" evidence="2 4">
    <location>
        <position position="127"/>
    </location>
    <ligand>
        <name>sn-glycerol 3-phosphate</name>
        <dbReference type="ChEBI" id="CHEBI:57597"/>
    </ligand>
</feature>
<feature type="binding site" evidence="2 4">
    <location>
        <position position="129"/>
    </location>
    <ligand>
        <name>NADPH</name>
        <dbReference type="ChEBI" id="CHEBI:57783"/>
    </ligand>
</feature>
<feature type="binding site" evidence="4">
    <location>
        <position position="177"/>
    </location>
    <ligand>
        <name>sn-glycerol 3-phosphate</name>
        <dbReference type="ChEBI" id="CHEBI:57597"/>
    </ligand>
</feature>
<feature type="binding site" evidence="2 4">
    <location>
        <position position="230"/>
    </location>
    <ligand>
        <name>sn-glycerol 3-phosphate</name>
        <dbReference type="ChEBI" id="CHEBI:57597"/>
    </ligand>
</feature>
<feature type="binding site" evidence="2 4">
    <location>
        <position position="240"/>
    </location>
    <ligand>
        <name>sn-glycerol 3-phosphate</name>
        <dbReference type="ChEBI" id="CHEBI:57597"/>
    </ligand>
</feature>
<feature type="binding site" evidence="2 4">
    <location>
        <position position="241"/>
    </location>
    <ligand>
        <name>NADPH</name>
        <dbReference type="ChEBI" id="CHEBI:57783"/>
    </ligand>
</feature>
<feature type="binding site" evidence="2 4">
    <location>
        <position position="241"/>
    </location>
    <ligand>
        <name>sn-glycerol 3-phosphate</name>
        <dbReference type="ChEBI" id="CHEBI:57597"/>
    </ligand>
</feature>
<feature type="binding site" evidence="2 4">
    <location>
        <position position="242"/>
    </location>
    <ligand>
        <name>sn-glycerol 3-phosphate</name>
        <dbReference type="ChEBI" id="CHEBI:57597"/>
    </ligand>
</feature>
<feature type="binding site" evidence="2 4">
    <location>
        <position position="265"/>
    </location>
    <ligand>
        <name>NADPH</name>
        <dbReference type="ChEBI" id="CHEBI:57783"/>
    </ligand>
</feature>
<feature type="binding site" evidence="2 4">
    <location>
        <position position="267"/>
    </location>
    <ligand>
        <name>NADPH</name>
        <dbReference type="ChEBI" id="CHEBI:57783"/>
    </ligand>
</feature>
<feature type="strand" evidence="5">
    <location>
        <begin position="2"/>
        <end position="6"/>
    </location>
</feature>
<feature type="helix" evidence="5">
    <location>
        <begin position="10"/>
        <end position="21"/>
    </location>
</feature>
<feature type="strand" evidence="5">
    <location>
        <begin position="25"/>
        <end position="29"/>
    </location>
</feature>
<feature type="helix" evidence="5">
    <location>
        <begin position="33"/>
        <end position="42"/>
    </location>
</feature>
<feature type="strand" evidence="5">
    <location>
        <begin position="55"/>
        <end position="59"/>
    </location>
</feature>
<feature type="helix" evidence="5">
    <location>
        <begin position="61"/>
        <end position="63"/>
    </location>
</feature>
<feature type="strand" evidence="5">
    <location>
        <begin position="68"/>
        <end position="72"/>
    </location>
</feature>
<feature type="helix" evidence="5">
    <location>
        <begin position="76"/>
        <end position="78"/>
    </location>
</feature>
<feature type="helix" evidence="5">
    <location>
        <begin position="79"/>
        <end position="83"/>
    </location>
</feature>
<feature type="strand" evidence="5">
    <location>
        <begin position="91"/>
        <end position="95"/>
    </location>
</feature>
<feature type="turn" evidence="5">
    <location>
        <begin position="102"/>
        <end position="104"/>
    </location>
</feature>
<feature type="helix" evidence="5">
    <location>
        <begin position="108"/>
        <end position="115"/>
    </location>
</feature>
<feature type="strand" evidence="5">
    <location>
        <begin position="120"/>
        <end position="126"/>
    </location>
</feature>
<feature type="helix" evidence="5">
    <location>
        <begin position="129"/>
        <end position="133"/>
    </location>
</feature>
<feature type="strand" evidence="5">
    <location>
        <begin position="138"/>
        <end position="144"/>
    </location>
</feature>
<feature type="helix" evidence="5">
    <location>
        <begin position="147"/>
        <end position="154"/>
    </location>
</feature>
<feature type="strand" evidence="5">
    <location>
        <begin position="157"/>
        <end position="165"/>
    </location>
</feature>
<feature type="helix" evidence="5">
    <location>
        <begin position="167"/>
        <end position="189"/>
    </location>
</feature>
<feature type="helix" evidence="5">
    <location>
        <begin position="194"/>
        <end position="214"/>
    </location>
</feature>
<feature type="helix" evidence="5">
    <location>
        <begin position="219"/>
        <end position="222"/>
    </location>
</feature>
<feature type="turn" evidence="5">
    <location>
        <begin position="225"/>
        <end position="227"/>
    </location>
</feature>
<feature type="helix" evidence="5">
    <location>
        <begin position="228"/>
        <end position="236"/>
    </location>
</feature>
<feature type="helix" evidence="5">
    <location>
        <begin position="241"/>
        <end position="251"/>
    </location>
</feature>
<feature type="helix" evidence="5">
    <location>
        <begin position="255"/>
        <end position="260"/>
    </location>
</feature>
<feature type="helix" evidence="5">
    <location>
        <begin position="268"/>
        <end position="281"/>
    </location>
</feature>
<feature type="helix" evidence="5">
    <location>
        <begin position="287"/>
        <end position="297"/>
    </location>
</feature>
<feature type="helix" evidence="5">
    <location>
        <begin position="302"/>
        <end position="310"/>
    </location>
</feature>
<keyword id="KW-0002">3D-structure</keyword>
<keyword id="KW-0963">Cytoplasm</keyword>
<keyword id="KW-0444">Lipid biosynthesis</keyword>
<keyword id="KW-0443">Lipid metabolism</keyword>
<keyword id="KW-0520">NAD</keyword>
<keyword id="KW-0521">NADP</keyword>
<keyword id="KW-0547">Nucleotide-binding</keyword>
<keyword id="KW-0560">Oxidoreductase</keyword>
<keyword id="KW-0594">Phospholipid biosynthesis</keyword>
<keyword id="KW-1208">Phospholipid metabolism</keyword>
<organism>
    <name type="scientific">Thermotoga sp. (strain RQ2)</name>
    <dbReference type="NCBI Taxonomy" id="126740"/>
    <lineage>
        <taxon>Bacteria</taxon>
        <taxon>Thermotogati</taxon>
        <taxon>Thermotogota</taxon>
        <taxon>Thermotogae</taxon>
        <taxon>Thermotogales</taxon>
        <taxon>Thermotogaceae</taxon>
        <taxon>Thermotoga</taxon>
    </lineage>
</organism>
<accession>A0A0F6AK91</accession>
<sequence>MRFFVLGAGSWGTVFAQILHENGEEVVLWARRKEIVDLINVSHTSPYVEESKITVRATNDLEEIKKEDILVIAIPVQYIREHLLRLPVKPSMVLNLSKGIEIKTGKRVSEIVEEILGCPYAVLSGPSHAEEVAKKLPTAVTLAGENSKELQKRISTEYFRVYTCEDVVGVEIAGALKNVIAIAAGILDGFGGWDNAKAALETRGIYEIARFGMFFGADQKTFMGLAGIGDLMVTCNSRYSRNRRFGELIARGFNPLKLLESSNQVVEGAFTVKAVMKIAKENKIDMPISEEVYRVVYEGKPPLQSMRDLMRRSLKDEFWAS</sequence>
<name>GPDA_THESQ</name>